<feature type="chain" id="PRO_1000045967" description="2-succinylbenzoate--CoA ligase">
    <location>
        <begin position="1"/>
        <end position="492"/>
    </location>
</feature>
<keyword id="KW-0067">ATP-binding</keyword>
<keyword id="KW-0436">Ligase</keyword>
<keyword id="KW-0474">Menaquinone biosynthesis</keyword>
<keyword id="KW-0547">Nucleotide-binding</keyword>
<keyword id="KW-1185">Reference proteome</keyword>
<comment type="function">
    <text evidence="1">Converts 2-succinylbenzoate (OSB) to 2-succinylbenzoyl-CoA (OSB-CoA).</text>
</comment>
<comment type="catalytic activity">
    <reaction evidence="1">
        <text>2-succinylbenzoate + ATP + CoA = 2-succinylbenzoyl-CoA + AMP + diphosphate</text>
        <dbReference type="Rhea" id="RHEA:17009"/>
        <dbReference type="ChEBI" id="CHEBI:18325"/>
        <dbReference type="ChEBI" id="CHEBI:30616"/>
        <dbReference type="ChEBI" id="CHEBI:33019"/>
        <dbReference type="ChEBI" id="CHEBI:57287"/>
        <dbReference type="ChEBI" id="CHEBI:57364"/>
        <dbReference type="ChEBI" id="CHEBI:456215"/>
        <dbReference type="EC" id="6.2.1.26"/>
    </reaction>
</comment>
<comment type="pathway">
    <text evidence="1">Quinol/quinone metabolism; 1,4-dihydroxy-2-naphthoate biosynthesis; 1,4-dihydroxy-2-naphthoate from chorismate: step 5/7.</text>
</comment>
<comment type="pathway">
    <text evidence="1">Quinol/quinone metabolism; menaquinone biosynthesis.</text>
</comment>
<comment type="similarity">
    <text evidence="1">Belongs to the ATP-dependent AMP-binding enzyme family. MenE subfamily.</text>
</comment>
<reference key="1">
    <citation type="book" date="2006" name="Gram positive pathogens, 2nd edition">
        <title>The Staphylococcus aureus NCTC 8325 genome.</title>
        <editorList>
            <person name="Fischetti V."/>
            <person name="Novick R."/>
            <person name="Ferretti J."/>
            <person name="Portnoy D."/>
            <person name="Rood J."/>
        </editorList>
        <authorList>
            <person name="Gillaspy A.F."/>
            <person name="Worrell V."/>
            <person name="Orvis J."/>
            <person name="Roe B.A."/>
            <person name="Dyer D.W."/>
            <person name="Iandolo J.J."/>
        </authorList>
    </citation>
    <scope>NUCLEOTIDE SEQUENCE [LARGE SCALE GENOMIC DNA]</scope>
    <source>
        <strain>NCTC 8325 / PS 47</strain>
    </source>
</reference>
<organism>
    <name type="scientific">Staphylococcus aureus (strain NCTC 8325 / PS 47)</name>
    <dbReference type="NCBI Taxonomy" id="93061"/>
    <lineage>
        <taxon>Bacteria</taxon>
        <taxon>Bacillati</taxon>
        <taxon>Bacillota</taxon>
        <taxon>Bacilli</taxon>
        <taxon>Bacillales</taxon>
        <taxon>Staphylococcaceae</taxon>
        <taxon>Staphylococcus</taxon>
    </lineage>
</organism>
<name>MENE_STAA8</name>
<protein>
    <recommendedName>
        <fullName evidence="1">2-succinylbenzoate--CoA ligase</fullName>
        <ecNumber evidence="1">6.2.1.26</ecNumber>
    </recommendedName>
    <alternativeName>
        <fullName evidence="1">o-succinylbenzoyl-CoA synthetase</fullName>
        <shortName evidence="1">OSB-CoA synthetase</shortName>
    </alternativeName>
</protein>
<proteinExistence type="inferred from homology"/>
<accession>Q2G2V3</accession>
<sequence length="492" mass="55415">MDFWLYKQAQQNGHHIAITDGQESYTYQNLYCEASLLAKRLKAYQQSRVGLYIDNSIQSIILIHACWLANIEIAMINTRLTPNEMTNQMKSIDVQLIFCTLPLELRGFQIVSLDDIEFAGRDITTNSLLDNTMGIQYETSNETVVPKESPSNILNTSFNLDDIASIMFTSGTTGPQKAVPQTFRNHYASAIGCKESLGFDRDTNWLSVLPIYHISGLSVLLRAVIEGFTVRIVDKFNAEQILTMIKNERITHISLVPQTLNWLMQQGLHEPYNLQKILLGGAKLSATMIETALQYNLPIYNSFGMTETCSQFLTATPEMLHARPDTVGMPSANVDVKIKNPNKEGHGELMIKGANVMNVYLYPTDLTGTFENGYFNTGDIAEIDHEGYVMIYDRRKDLIISGGENIYPYQIETVAKQFPGISDAVCVGHPDDTWGQVPKLYFVSESDISKAQLIAYLSQHLAKYKVPKHFEKVDTLPYTSTGKLQRNKLYRG</sequence>
<evidence type="ECO:0000255" key="1">
    <source>
        <dbReference type="HAMAP-Rule" id="MF_00731"/>
    </source>
</evidence>
<gene>
    <name evidence="1" type="primary">menE</name>
    <name type="ordered locus">SAOUHSC_01916</name>
</gene>
<dbReference type="EC" id="6.2.1.26" evidence="1"/>
<dbReference type="EMBL" id="CP000253">
    <property type="protein sequence ID" value="ABD30979.1"/>
    <property type="molecule type" value="Genomic_DNA"/>
</dbReference>
<dbReference type="RefSeq" id="WP_000348360.1">
    <property type="nucleotide sequence ID" value="NZ_LS483365.1"/>
</dbReference>
<dbReference type="RefSeq" id="YP_500417.1">
    <property type="nucleotide sequence ID" value="NC_007795.1"/>
</dbReference>
<dbReference type="SMR" id="Q2G2V3"/>
<dbReference type="STRING" id="93061.SAOUHSC_01916"/>
<dbReference type="PaxDb" id="1280-SAXN108_1825"/>
<dbReference type="GeneID" id="3921058"/>
<dbReference type="KEGG" id="sao:SAOUHSC_01916"/>
<dbReference type="PATRIC" id="fig|93061.5.peg.1745"/>
<dbReference type="eggNOG" id="COG0318">
    <property type="taxonomic scope" value="Bacteria"/>
</dbReference>
<dbReference type="HOGENOM" id="CLU_000022_59_0_9"/>
<dbReference type="OrthoDB" id="9757771at2"/>
<dbReference type="UniPathway" id="UPA00079"/>
<dbReference type="UniPathway" id="UPA01057">
    <property type="reaction ID" value="UER00166"/>
</dbReference>
<dbReference type="PRO" id="PR:Q2G2V3"/>
<dbReference type="Proteomes" id="UP000008816">
    <property type="component" value="Chromosome"/>
</dbReference>
<dbReference type="GO" id="GO:0016020">
    <property type="term" value="C:membrane"/>
    <property type="evidence" value="ECO:0000318"/>
    <property type="project" value="GO_Central"/>
</dbReference>
<dbReference type="GO" id="GO:0005524">
    <property type="term" value="F:ATP binding"/>
    <property type="evidence" value="ECO:0007669"/>
    <property type="project" value="UniProtKB-KW"/>
</dbReference>
<dbReference type="GO" id="GO:0004467">
    <property type="term" value="F:long-chain fatty acid-CoA ligase activity"/>
    <property type="evidence" value="ECO:0000318"/>
    <property type="project" value="GO_Central"/>
</dbReference>
<dbReference type="GO" id="GO:0008756">
    <property type="term" value="F:o-succinylbenzoate-CoA ligase activity"/>
    <property type="evidence" value="ECO:0007669"/>
    <property type="project" value="UniProtKB-UniRule"/>
</dbReference>
<dbReference type="GO" id="GO:0009234">
    <property type="term" value="P:menaquinone biosynthetic process"/>
    <property type="evidence" value="ECO:0007669"/>
    <property type="project" value="UniProtKB-UniRule"/>
</dbReference>
<dbReference type="CDD" id="cd05912">
    <property type="entry name" value="OSB_CoA_lg"/>
    <property type="match status" value="1"/>
</dbReference>
<dbReference type="Gene3D" id="3.30.300.30">
    <property type="match status" value="1"/>
</dbReference>
<dbReference type="Gene3D" id="3.40.50.12780">
    <property type="entry name" value="N-terminal domain of ligase-like"/>
    <property type="match status" value="1"/>
</dbReference>
<dbReference type="HAMAP" id="MF_00731">
    <property type="entry name" value="MenE"/>
    <property type="match status" value="1"/>
</dbReference>
<dbReference type="InterPro" id="IPR025110">
    <property type="entry name" value="AMP-bd_C"/>
</dbReference>
<dbReference type="InterPro" id="IPR045851">
    <property type="entry name" value="AMP-bd_C_sf"/>
</dbReference>
<dbReference type="InterPro" id="IPR000873">
    <property type="entry name" value="AMP-dep_synth/lig_dom"/>
</dbReference>
<dbReference type="InterPro" id="IPR042099">
    <property type="entry name" value="ANL_N_sf"/>
</dbReference>
<dbReference type="InterPro" id="IPR050237">
    <property type="entry name" value="ATP-dep_AMP-bd_enzyme"/>
</dbReference>
<dbReference type="InterPro" id="IPR010192">
    <property type="entry name" value="MenE"/>
</dbReference>
<dbReference type="NCBIfam" id="TIGR01923">
    <property type="entry name" value="menE"/>
    <property type="match status" value="1"/>
</dbReference>
<dbReference type="PANTHER" id="PTHR43767">
    <property type="entry name" value="LONG-CHAIN-FATTY-ACID--COA LIGASE"/>
    <property type="match status" value="1"/>
</dbReference>
<dbReference type="PANTHER" id="PTHR43767:SF1">
    <property type="entry name" value="NONRIBOSOMAL PEPTIDE SYNTHASE PES1 (EUROFUNG)-RELATED"/>
    <property type="match status" value="1"/>
</dbReference>
<dbReference type="Pfam" id="PF00501">
    <property type="entry name" value="AMP-binding"/>
    <property type="match status" value="1"/>
</dbReference>
<dbReference type="Pfam" id="PF13193">
    <property type="entry name" value="AMP-binding_C"/>
    <property type="match status" value="1"/>
</dbReference>
<dbReference type="SUPFAM" id="SSF56801">
    <property type="entry name" value="Acetyl-CoA synthetase-like"/>
    <property type="match status" value="1"/>
</dbReference>